<protein>
    <recommendedName>
        <fullName evidence="1">Ribokinase</fullName>
        <shortName evidence="1">RK</shortName>
        <ecNumber evidence="1">2.7.1.15</ecNumber>
    </recommendedName>
</protein>
<proteinExistence type="inferred from homology"/>
<organism>
    <name type="scientific">Bacillus subtilis (strain 168)</name>
    <dbReference type="NCBI Taxonomy" id="224308"/>
    <lineage>
        <taxon>Bacteria</taxon>
        <taxon>Bacillati</taxon>
        <taxon>Bacillota</taxon>
        <taxon>Bacilli</taxon>
        <taxon>Bacillales</taxon>
        <taxon>Bacillaceae</taxon>
        <taxon>Bacillus</taxon>
    </lineage>
</organism>
<feature type="chain" id="PRO_0000080096" description="Ribokinase">
    <location>
        <begin position="1"/>
        <end position="293"/>
    </location>
</feature>
<feature type="active site" description="Proton acceptor" evidence="1">
    <location>
        <position position="242"/>
    </location>
</feature>
<feature type="binding site" evidence="1">
    <location>
        <begin position="11"/>
        <end position="13"/>
    </location>
    <ligand>
        <name>substrate</name>
    </ligand>
</feature>
<feature type="binding site" evidence="1">
    <location>
        <begin position="39"/>
        <end position="43"/>
    </location>
    <ligand>
        <name>substrate</name>
    </ligand>
</feature>
<feature type="binding site" evidence="1">
    <location>
        <position position="139"/>
    </location>
    <ligand>
        <name>substrate</name>
    </ligand>
</feature>
<feature type="binding site" evidence="1">
    <location>
        <position position="183"/>
    </location>
    <ligand>
        <name>ATP</name>
        <dbReference type="ChEBI" id="CHEBI:30616"/>
    </ligand>
</feature>
<feature type="binding site" evidence="1">
    <location>
        <begin position="210"/>
        <end position="215"/>
    </location>
    <ligand>
        <name>ATP</name>
        <dbReference type="ChEBI" id="CHEBI:30616"/>
    </ligand>
</feature>
<feature type="binding site" evidence="1">
    <location>
        <position position="236"/>
    </location>
    <ligand>
        <name>K(+)</name>
        <dbReference type="ChEBI" id="CHEBI:29103"/>
    </ligand>
</feature>
<feature type="binding site" evidence="1">
    <location>
        <position position="238"/>
    </location>
    <ligand>
        <name>K(+)</name>
        <dbReference type="ChEBI" id="CHEBI:29103"/>
    </ligand>
</feature>
<feature type="binding site" evidence="1">
    <location>
        <begin position="241"/>
        <end position="242"/>
    </location>
    <ligand>
        <name>ATP</name>
        <dbReference type="ChEBI" id="CHEBI:30616"/>
    </ligand>
</feature>
<feature type="binding site" evidence="1">
    <location>
        <position position="242"/>
    </location>
    <ligand>
        <name>substrate</name>
    </ligand>
</feature>
<feature type="binding site" evidence="1">
    <location>
        <position position="266"/>
    </location>
    <ligand>
        <name>ATP</name>
        <dbReference type="ChEBI" id="CHEBI:30616"/>
    </ligand>
</feature>
<feature type="binding site" evidence="1">
    <location>
        <position position="272"/>
    </location>
    <ligand>
        <name>K(+)</name>
        <dbReference type="ChEBI" id="CHEBI:29103"/>
    </ligand>
</feature>
<feature type="binding site" evidence="1">
    <location>
        <position position="275"/>
    </location>
    <ligand>
        <name>K(+)</name>
        <dbReference type="ChEBI" id="CHEBI:29103"/>
    </ligand>
</feature>
<feature type="binding site" evidence="1">
    <location>
        <position position="277"/>
    </location>
    <ligand>
        <name>K(+)</name>
        <dbReference type="ChEBI" id="CHEBI:29103"/>
    </ligand>
</feature>
<feature type="sequence conflict" description="In Ref. 1; CAA81049." evidence="2" ref="1">
    <original>TRNEVEELLS</original>
    <variation>DKK</variation>
    <location>
        <begin position="284"/>
        <end position="293"/>
    </location>
</feature>
<evidence type="ECO:0000255" key="1">
    <source>
        <dbReference type="HAMAP-Rule" id="MF_01987"/>
    </source>
</evidence>
<evidence type="ECO:0000305" key="2"/>
<keyword id="KW-0067">ATP-binding</keyword>
<keyword id="KW-0119">Carbohydrate metabolism</keyword>
<keyword id="KW-0963">Cytoplasm</keyword>
<keyword id="KW-0418">Kinase</keyword>
<keyword id="KW-0460">Magnesium</keyword>
<keyword id="KW-0479">Metal-binding</keyword>
<keyword id="KW-0547">Nucleotide-binding</keyword>
<keyword id="KW-0630">Potassium</keyword>
<keyword id="KW-1185">Reference proteome</keyword>
<keyword id="KW-0808">Transferase</keyword>
<reference key="1">
    <citation type="journal article" date="1994" name="Microbiology">
        <title>Analysis of a ribose transport operon from Bacillus subtilis.</title>
        <authorList>
            <person name="Woodson K."/>
            <person name="Devine K.M."/>
        </authorList>
    </citation>
    <scope>NUCLEOTIDE SEQUENCE [GENOMIC DNA]</scope>
    <source>
        <strain>168</strain>
    </source>
</reference>
<reference key="2">
    <citation type="journal article" date="1997" name="Microbiology">
        <title>The Bacillus subtilis genome from gerBC (311 degrees) to licR (334 degrees).</title>
        <authorList>
            <person name="Presecan E."/>
            <person name="Moszer I."/>
            <person name="Boursier L."/>
            <person name="Cruz Ramos H."/>
            <person name="De La Fuente V."/>
            <person name="Hullo M.-F."/>
            <person name="Lelong C."/>
            <person name="Schleich S."/>
            <person name="Sekowska A."/>
            <person name="Song B.H."/>
            <person name="Villani G."/>
            <person name="Kunst F."/>
            <person name="Danchin A."/>
            <person name="Glaser P."/>
        </authorList>
    </citation>
    <scope>NUCLEOTIDE SEQUENCE [GENOMIC DNA]</scope>
    <source>
        <strain>168</strain>
    </source>
</reference>
<reference key="3">
    <citation type="journal article" date="1997" name="Nature">
        <title>The complete genome sequence of the Gram-positive bacterium Bacillus subtilis.</title>
        <authorList>
            <person name="Kunst F."/>
            <person name="Ogasawara N."/>
            <person name="Moszer I."/>
            <person name="Albertini A.M."/>
            <person name="Alloni G."/>
            <person name="Azevedo V."/>
            <person name="Bertero M.G."/>
            <person name="Bessieres P."/>
            <person name="Bolotin A."/>
            <person name="Borchert S."/>
            <person name="Borriss R."/>
            <person name="Boursier L."/>
            <person name="Brans A."/>
            <person name="Braun M."/>
            <person name="Brignell S.C."/>
            <person name="Bron S."/>
            <person name="Brouillet S."/>
            <person name="Bruschi C.V."/>
            <person name="Caldwell B."/>
            <person name="Capuano V."/>
            <person name="Carter N.M."/>
            <person name="Choi S.-K."/>
            <person name="Codani J.-J."/>
            <person name="Connerton I.F."/>
            <person name="Cummings N.J."/>
            <person name="Daniel R.A."/>
            <person name="Denizot F."/>
            <person name="Devine K.M."/>
            <person name="Duesterhoeft A."/>
            <person name="Ehrlich S.D."/>
            <person name="Emmerson P.T."/>
            <person name="Entian K.-D."/>
            <person name="Errington J."/>
            <person name="Fabret C."/>
            <person name="Ferrari E."/>
            <person name="Foulger D."/>
            <person name="Fritz C."/>
            <person name="Fujita M."/>
            <person name="Fujita Y."/>
            <person name="Fuma S."/>
            <person name="Galizzi A."/>
            <person name="Galleron N."/>
            <person name="Ghim S.-Y."/>
            <person name="Glaser P."/>
            <person name="Goffeau A."/>
            <person name="Golightly E.J."/>
            <person name="Grandi G."/>
            <person name="Guiseppi G."/>
            <person name="Guy B.J."/>
            <person name="Haga K."/>
            <person name="Haiech J."/>
            <person name="Harwood C.R."/>
            <person name="Henaut A."/>
            <person name="Hilbert H."/>
            <person name="Holsappel S."/>
            <person name="Hosono S."/>
            <person name="Hullo M.-F."/>
            <person name="Itaya M."/>
            <person name="Jones L.-M."/>
            <person name="Joris B."/>
            <person name="Karamata D."/>
            <person name="Kasahara Y."/>
            <person name="Klaerr-Blanchard M."/>
            <person name="Klein C."/>
            <person name="Kobayashi Y."/>
            <person name="Koetter P."/>
            <person name="Koningstein G."/>
            <person name="Krogh S."/>
            <person name="Kumano M."/>
            <person name="Kurita K."/>
            <person name="Lapidus A."/>
            <person name="Lardinois S."/>
            <person name="Lauber J."/>
            <person name="Lazarevic V."/>
            <person name="Lee S.-M."/>
            <person name="Levine A."/>
            <person name="Liu H."/>
            <person name="Masuda S."/>
            <person name="Mauel C."/>
            <person name="Medigue C."/>
            <person name="Medina N."/>
            <person name="Mellado R.P."/>
            <person name="Mizuno M."/>
            <person name="Moestl D."/>
            <person name="Nakai S."/>
            <person name="Noback M."/>
            <person name="Noone D."/>
            <person name="O'Reilly M."/>
            <person name="Ogawa K."/>
            <person name="Ogiwara A."/>
            <person name="Oudega B."/>
            <person name="Park S.-H."/>
            <person name="Parro V."/>
            <person name="Pohl T.M."/>
            <person name="Portetelle D."/>
            <person name="Porwollik S."/>
            <person name="Prescott A.M."/>
            <person name="Presecan E."/>
            <person name="Pujic P."/>
            <person name="Purnelle B."/>
            <person name="Rapoport G."/>
            <person name="Rey M."/>
            <person name="Reynolds S."/>
            <person name="Rieger M."/>
            <person name="Rivolta C."/>
            <person name="Rocha E."/>
            <person name="Roche B."/>
            <person name="Rose M."/>
            <person name="Sadaie Y."/>
            <person name="Sato T."/>
            <person name="Scanlan E."/>
            <person name="Schleich S."/>
            <person name="Schroeter R."/>
            <person name="Scoffone F."/>
            <person name="Sekiguchi J."/>
            <person name="Sekowska A."/>
            <person name="Seror S.J."/>
            <person name="Serror P."/>
            <person name="Shin B.-S."/>
            <person name="Soldo B."/>
            <person name="Sorokin A."/>
            <person name="Tacconi E."/>
            <person name="Takagi T."/>
            <person name="Takahashi H."/>
            <person name="Takemaru K."/>
            <person name="Takeuchi M."/>
            <person name="Tamakoshi A."/>
            <person name="Tanaka T."/>
            <person name="Terpstra P."/>
            <person name="Tognoni A."/>
            <person name="Tosato V."/>
            <person name="Uchiyama S."/>
            <person name="Vandenbol M."/>
            <person name="Vannier F."/>
            <person name="Vassarotti A."/>
            <person name="Viari A."/>
            <person name="Wambutt R."/>
            <person name="Wedler E."/>
            <person name="Wedler H."/>
            <person name="Weitzenegger T."/>
            <person name="Winters P."/>
            <person name="Wipat A."/>
            <person name="Yamamoto H."/>
            <person name="Yamane K."/>
            <person name="Yasumoto K."/>
            <person name="Yata K."/>
            <person name="Yoshida K."/>
            <person name="Yoshikawa H.-F."/>
            <person name="Zumstein E."/>
            <person name="Yoshikawa H."/>
            <person name="Danchin A."/>
        </authorList>
    </citation>
    <scope>NUCLEOTIDE SEQUENCE [LARGE SCALE GENOMIC DNA]</scope>
    <source>
        <strain>168</strain>
    </source>
</reference>
<dbReference type="EC" id="2.7.1.15" evidence="1"/>
<dbReference type="EMBL" id="Z25798">
    <property type="protein sequence ID" value="CAA81049.1"/>
    <property type="molecule type" value="Genomic_DNA"/>
</dbReference>
<dbReference type="EMBL" id="Z92953">
    <property type="protein sequence ID" value="CAB07465.1"/>
    <property type="molecule type" value="Genomic_DNA"/>
</dbReference>
<dbReference type="EMBL" id="AL009126">
    <property type="protein sequence ID" value="CAB15609.1"/>
    <property type="molecule type" value="Genomic_DNA"/>
</dbReference>
<dbReference type="PIR" id="D69690">
    <property type="entry name" value="D69690"/>
</dbReference>
<dbReference type="RefSeq" id="NP_391473.1">
    <property type="nucleotide sequence ID" value="NC_000964.3"/>
</dbReference>
<dbReference type="RefSeq" id="WP_009968280.1">
    <property type="nucleotide sequence ID" value="NZ_OZ025638.1"/>
</dbReference>
<dbReference type="SMR" id="P36945"/>
<dbReference type="FunCoup" id="P36945">
    <property type="interactions" value="650"/>
</dbReference>
<dbReference type="STRING" id="224308.BSU35920"/>
<dbReference type="jPOST" id="P36945"/>
<dbReference type="PaxDb" id="224308-BSU35920"/>
<dbReference type="EnsemblBacteria" id="CAB15609">
    <property type="protein sequence ID" value="CAB15609"/>
    <property type="gene ID" value="BSU_35920"/>
</dbReference>
<dbReference type="GeneID" id="936844"/>
<dbReference type="KEGG" id="bsu:BSU35920"/>
<dbReference type="PATRIC" id="fig|224308.179.peg.3889"/>
<dbReference type="eggNOG" id="COG0524">
    <property type="taxonomic scope" value="Bacteria"/>
</dbReference>
<dbReference type="InParanoid" id="P36945"/>
<dbReference type="OrthoDB" id="9775849at2"/>
<dbReference type="PhylomeDB" id="P36945"/>
<dbReference type="BioCyc" id="BSUB:BSU35920-MONOMER"/>
<dbReference type="UniPathway" id="UPA00916">
    <property type="reaction ID" value="UER00889"/>
</dbReference>
<dbReference type="Proteomes" id="UP000001570">
    <property type="component" value="Chromosome"/>
</dbReference>
<dbReference type="GO" id="GO:0005829">
    <property type="term" value="C:cytosol"/>
    <property type="evidence" value="ECO:0000318"/>
    <property type="project" value="GO_Central"/>
</dbReference>
<dbReference type="GO" id="GO:0005524">
    <property type="term" value="F:ATP binding"/>
    <property type="evidence" value="ECO:0007669"/>
    <property type="project" value="UniProtKB-UniRule"/>
</dbReference>
<dbReference type="GO" id="GO:0046872">
    <property type="term" value="F:metal ion binding"/>
    <property type="evidence" value="ECO:0007669"/>
    <property type="project" value="UniProtKB-KW"/>
</dbReference>
<dbReference type="GO" id="GO:0004747">
    <property type="term" value="F:ribokinase activity"/>
    <property type="evidence" value="ECO:0007669"/>
    <property type="project" value="UniProtKB-UniRule"/>
</dbReference>
<dbReference type="GO" id="GO:0019303">
    <property type="term" value="P:D-ribose catabolic process"/>
    <property type="evidence" value="ECO:0007669"/>
    <property type="project" value="UniProtKB-UniRule"/>
</dbReference>
<dbReference type="CDD" id="cd01174">
    <property type="entry name" value="ribokinase"/>
    <property type="match status" value="1"/>
</dbReference>
<dbReference type="Gene3D" id="3.40.1190.20">
    <property type="match status" value="1"/>
</dbReference>
<dbReference type="HAMAP" id="MF_01987">
    <property type="entry name" value="Ribokinase"/>
    <property type="match status" value="1"/>
</dbReference>
<dbReference type="InterPro" id="IPR002173">
    <property type="entry name" value="Carboh/pur_kinase_PfkB_CS"/>
</dbReference>
<dbReference type="InterPro" id="IPR011611">
    <property type="entry name" value="PfkB_dom"/>
</dbReference>
<dbReference type="InterPro" id="IPR002139">
    <property type="entry name" value="Ribo/fructo_kinase"/>
</dbReference>
<dbReference type="InterPro" id="IPR011877">
    <property type="entry name" value="Ribokinase"/>
</dbReference>
<dbReference type="InterPro" id="IPR029056">
    <property type="entry name" value="Ribokinase-like"/>
</dbReference>
<dbReference type="NCBIfam" id="TIGR02152">
    <property type="entry name" value="D_ribokin_bact"/>
    <property type="match status" value="1"/>
</dbReference>
<dbReference type="PANTHER" id="PTHR10584:SF166">
    <property type="entry name" value="RIBOKINASE"/>
    <property type="match status" value="1"/>
</dbReference>
<dbReference type="PANTHER" id="PTHR10584">
    <property type="entry name" value="SUGAR KINASE"/>
    <property type="match status" value="1"/>
</dbReference>
<dbReference type="Pfam" id="PF00294">
    <property type="entry name" value="PfkB"/>
    <property type="match status" value="1"/>
</dbReference>
<dbReference type="PRINTS" id="PR00990">
    <property type="entry name" value="RIBOKINASE"/>
</dbReference>
<dbReference type="SUPFAM" id="SSF53613">
    <property type="entry name" value="Ribokinase-like"/>
    <property type="match status" value="1"/>
</dbReference>
<dbReference type="PROSITE" id="PS00584">
    <property type="entry name" value="PFKB_KINASES_2"/>
    <property type="match status" value="1"/>
</dbReference>
<accession>P36945</accession>
<accession>P96733</accession>
<sequence length="293" mass="31138">MRNICVIGSCSMDLVVTSDKRPKAGETVLGTSFQTVPGGKGANQAVAAARLGAQVFMVGKVGDDHYGTAILNNLKANGVRTDYMEPVTHTESGTAHIVLAEGDNSIVVVKGANDDITPAYALNALEQIEKVDMVLIQQEIPEETVDEVCKYCHSHDIPIILNPAPARPLKQETIDHATYLTPNEHEASILFPELTISEALALYPAKLFITEGKQGVRYSAGSKEVLIPSFPVEPVDTTGAGDTFNAAFAVALAEGKDIEAALRFANRAASLSVCSFGAQGGMPTRNEVEELLS</sequence>
<name>RBSK_BACSU</name>
<gene>
    <name evidence="1" type="primary">rbsK</name>
    <name type="ordered locus">BSU35920</name>
</gene>
<comment type="function">
    <text evidence="1">Catalyzes the phosphorylation of ribose at O-5 in a reaction requiring ATP and magnesium. The resulting D-ribose-5-phosphate can then be used either for sythesis of nucleotides, histidine, and tryptophan, or as a component of the pentose phosphate pathway.</text>
</comment>
<comment type="catalytic activity">
    <reaction evidence="1">
        <text>D-ribose + ATP = D-ribose 5-phosphate + ADP + H(+)</text>
        <dbReference type="Rhea" id="RHEA:13697"/>
        <dbReference type="ChEBI" id="CHEBI:15378"/>
        <dbReference type="ChEBI" id="CHEBI:30616"/>
        <dbReference type="ChEBI" id="CHEBI:47013"/>
        <dbReference type="ChEBI" id="CHEBI:78346"/>
        <dbReference type="ChEBI" id="CHEBI:456216"/>
        <dbReference type="EC" id="2.7.1.15"/>
    </reaction>
</comment>
<comment type="cofactor">
    <cofactor evidence="1">
        <name>Mg(2+)</name>
        <dbReference type="ChEBI" id="CHEBI:18420"/>
    </cofactor>
    <text evidence="1">Requires a divalent cation, most likely magnesium in vivo, as an electrophilic catalyst to aid phosphoryl group transfer. It is the chelate of the metal and the nucleotide that is the actual substrate.</text>
</comment>
<comment type="activity regulation">
    <text evidence="1">Activated by a monovalent cation that binds near, but not in, the active site. The most likely occupant of the site in vivo is potassium. Ion binding induces a conformational change that may alter substrate affinity.</text>
</comment>
<comment type="pathway">
    <text evidence="1">Carbohydrate metabolism; D-ribose degradation; D-ribose 5-phosphate from beta-D-ribopyranose: step 2/2.</text>
</comment>
<comment type="subunit">
    <text evidence="1">Homodimer.</text>
</comment>
<comment type="subcellular location">
    <subcellularLocation>
        <location evidence="1">Cytoplasm</location>
    </subcellularLocation>
</comment>
<comment type="similarity">
    <text evidence="1">Belongs to the carbohydrate kinase PfkB family. Ribokinase subfamily.</text>
</comment>